<dbReference type="EC" id="2.7.11.13"/>
<dbReference type="EMBL" id="AF288482">
    <property type="protein sequence ID" value="AAG01528.1"/>
    <property type="molecule type" value="mRNA"/>
</dbReference>
<dbReference type="EMBL" id="AE013599">
    <property type="protein sequence ID" value="AAF58177.2"/>
    <property type="molecule type" value="Genomic_DNA"/>
</dbReference>
<dbReference type="EMBL" id="AE013599">
    <property type="protein sequence ID" value="ABI31090.1"/>
    <property type="molecule type" value="Genomic_DNA"/>
</dbReference>
<dbReference type="EMBL" id="AE013599">
    <property type="protein sequence ID" value="ABI31091.1"/>
    <property type="molecule type" value="Genomic_DNA"/>
</dbReference>
<dbReference type="EMBL" id="AE013599">
    <property type="protein sequence ID" value="ABI31092.1"/>
    <property type="molecule type" value="Genomic_DNA"/>
</dbReference>
<dbReference type="EMBL" id="AE013599">
    <property type="protein sequence ID" value="ABI31093.1"/>
    <property type="molecule type" value="Genomic_DNA"/>
</dbReference>
<dbReference type="EMBL" id="AE013599">
    <property type="protein sequence ID" value="ABI31094.1"/>
    <property type="molecule type" value="Genomic_DNA"/>
</dbReference>
<dbReference type="EMBL" id="AY118402">
    <property type="protein sequence ID" value="AAM48431.1"/>
    <property type="molecule type" value="mRNA"/>
</dbReference>
<dbReference type="EMBL" id="BT056247">
    <property type="protein sequence ID" value="ACL68694.1"/>
    <property type="molecule type" value="mRNA"/>
</dbReference>
<dbReference type="RefSeq" id="NP_001036541.1">
    <molecule id="A1Z9X0-1"/>
    <property type="nucleotide sequence ID" value="NM_001043076.3"/>
</dbReference>
<dbReference type="RefSeq" id="NP_001036542.1">
    <molecule id="A1Z9X0-5"/>
    <property type="nucleotide sequence ID" value="NM_001043077.3"/>
</dbReference>
<dbReference type="RefSeq" id="NP_001036543.1">
    <molecule id="A1Z9X0-4"/>
    <property type="nucleotide sequence ID" value="NM_001043078.2"/>
</dbReference>
<dbReference type="RefSeq" id="NP_001036544.1">
    <molecule id="A1Z9X0-2"/>
    <property type="nucleotide sequence ID" value="NM_001043079.2"/>
</dbReference>
<dbReference type="RefSeq" id="NP_001036545.1">
    <molecule id="A1Z9X0-3"/>
    <property type="nucleotide sequence ID" value="NM_001043080.3"/>
</dbReference>
<dbReference type="RefSeq" id="NP_524892.2">
    <molecule id="A1Z9X0-1"/>
    <property type="nucleotide sequence ID" value="NM_080153.5"/>
</dbReference>
<dbReference type="SMR" id="A1Z9X0"/>
<dbReference type="BioGRID" id="70851">
    <property type="interactions" value="56"/>
</dbReference>
<dbReference type="ComplexPortal" id="CPX-2409">
    <property type="entry name" value="PAR cell polarity complex"/>
</dbReference>
<dbReference type="FunCoup" id="A1Z9X0">
    <property type="interactions" value="894"/>
</dbReference>
<dbReference type="IntAct" id="A1Z9X0">
    <property type="interactions" value="12"/>
</dbReference>
<dbReference type="STRING" id="7227.FBpp0302921"/>
<dbReference type="iPTMnet" id="A1Z9X0"/>
<dbReference type="PaxDb" id="7227-FBpp0302921"/>
<dbReference type="EnsemblMetazoa" id="FBtr0303429">
    <molecule id="A1Z9X0-2"/>
    <property type="protein sequence ID" value="FBpp0292486"/>
    <property type="gene ID" value="FBgn0261854"/>
</dbReference>
<dbReference type="EnsemblMetazoa" id="FBtr0303430">
    <molecule id="A1Z9X0-1"/>
    <property type="protein sequence ID" value="FBpp0292487"/>
    <property type="gene ID" value="FBgn0261854"/>
</dbReference>
<dbReference type="EnsemblMetazoa" id="FBtr0303431">
    <molecule id="A1Z9X0-3"/>
    <property type="protein sequence ID" value="FBpp0292488"/>
    <property type="gene ID" value="FBgn0261854"/>
</dbReference>
<dbReference type="EnsemblMetazoa" id="FBtr0303432">
    <molecule id="A1Z9X0-4"/>
    <property type="protein sequence ID" value="FBpp0292489"/>
    <property type="gene ID" value="FBgn0261854"/>
</dbReference>
<dbReference type="EnsemblMetazoa" id="FBtr0303433">
    <molecule id="A1Z9X0-5"/>
    <property type="protein sequence ID" value="FBpp0292490"/>
    <property type="gene ID" value="FBgn0261854"/>
</dbReference>
<dbReference type="EnsemblMetazoa" id="FBtr0303434">
    <molecule id="A1Z9X0-1"/>
    <property type="protein sequence ID" value="FBpp0292491"/>
    <property type="gene ID" value="FBgn0261854"/>
</dbReference>
<dbReference type="GeneID" id="47594"/>
<dbReference type="KEGG" id="dme:Dmel_CG42783"/>
<dbReference type="UCSC" id="CG10261-RA">
    <molecule id="A1Z9X0-1"/>
    <property type="organism name" value="d. melanogaster"/>
</dbReference>
<dbReference type="UCSC" id="CG10261-RB">
    <property type="organism name" value="d. melanogaster"/>
</dbReference>
<dbReference type="UCSC" id="CG10261-RD">
    <property type="organism name" value="d. melanogaster"/>
</dbReference>
<dbReference type="UCSC" id="CG10261-RE">
    <property type="organism name" value="d. melanogaster"/>
</dbReference>
<dbReference type="UCSC" id="CG10261-RF">
    <property type="organism name" value="d. melanogaster"/>
</dbReference>
<dbReference type="AGR" id="FB:FBgn0261854"/>
<dbReference type="CTD" id="47594"/>
<dbReference type="FlyBase" id="FBgn0261854">
    <property type="gene designation" value="aPKC"/>
</dbReference>
<dbReference type="VEuPathDB" id="VectorBase:FBgn0261854"/>
<dbReference type="eggNOG" id="KOG0695">
    <property type="taxonomic scope" value="Eukaryota"/>
</dbReference>
<dbReference type="GeneTree" id="ENSGT00940000169305"/>
<dbReference type="InParanoid" id="A1Z9X0"/>
<dbReference type="OMA" id="FTIKWID"/>
<dbReference type="OrthoDB" id="63267at2759"/>
<dbReference type="PhylomeDB" id="A1Z9X0"/>
<dbReference type="Reactome" id="R-DME-2173791">
    <property type="pathway name" value="TGF-beta receptor signaling in EMT (epithelial to mesenchymal transition)"/>
</dbReference>
<dbReference type="Reactome" id="R-DME-5218921">
    <property type="pathway name" value="VEGFR2 mediated cell proliferation"/>
</dbReference>
<dbReference type="Reactome" id="R-DME-9634635">
    <property type="pathway name" value="Estrogen-stimulated signaling through PRKCZ"/>
</dbReference>
<dbReference type="Reactome" id="R-DME-9755511">
    <property type="pathway name" value="KEAP1-NFE2L2 pathway"/>
</dbReference>
<dbReference type="SignaLink" id="A1Z9X0"/>
<dbReference type="BioGRID-ORCS" id="47594">
    <property type="hits" value="0 hits in 3 CRISPR screens"/>
</dbReference>
<dbReference type="GenomeRNAi" id="47594"/>
<dbReference type="PRO" id="PR:A1Z9X0"/>
<dbReference type="Proteomes" id="UP000000803">
    <property type="component" value="Chromosome 2R"/>
</dbReference>
<dbReference type="Bgee" id="FBgn0261854">
    <property type="expression patterns" value="Expressed in mechanosensory neuron (Drosophila) in haltere and 268 other cell types or tissues"/>
</dbReference>
<dbReference type="ExpressionAtlas" id="A1Z9X0">
    <property type="expression patterns" value="baseline and differential"/>
</dbReference>
<dbReference type="GO" id="GO:0045179">
    <property type="term" value="C:apical cortex"/>
    <property type="evidence" value="ECO:0000314"/>
    <property type="project" value="FlyBase"/>
</dbReference>
<dbReference type="GO" id="GO:0043296">
    <property type="term" value="C:apical junction complex"/>
    <property type="evidence" value="ECO:0000314"/>
    <property type="project" value="FlyBase"/>
</dbReference>
<dbReference type="GO" id="GO:0016324">
    <property type="term" value="C:apical plasma membrane"/>
    <property type="evidence" value="ECO:0000314"/>
    <property type="project" value="UniProtKB"/>
</dbReference>
<dbReference type="GO" id="GO:0016327">
    <property type="term" value="C:apicolateral plasma membrane"/>
    <property type="evidence" value="ECO:0000314"/>
    <property type="project" value="FlyBase"/>
</dbReference>
<dbReference type="GO" id="GO:0005938">
    <property type="term" value="C:cell cortex"/>
    <property type="evidence" value="ECO:0000304"/>
    <property type="project" value="FlyBase"/>
</dbReference>
<dbReference type="GO" id="GO:0120157">
    <property type="term" value="C:PAR polarity complex"/>
    <property type="evidence" value="ECO:0000353"/>
    <property type="project" value="UniProtKB"/>
</dbReference>
<dbReference type="GO" id="GO:0035003">
    <property type="term" value="C:subapical complex"/>
    <property type="evidence" value="ECO:0000304"/>
    <property type="project" value="FlyBase"/>
</dbReference>
<dbReference type="GO" id="GO:0005524">
    <property type="term" value="F:ATP binding"/>
    <property type="evidence" value="ECO:0007669"/>
    <property type="project" value="UniProtKB-KW"/>
</dbReference>
<dbReference type="GO" id="GO:0004697">
    <property type="term" value="F:diacylglycerol-dependent serine/threonine kinase activity"/>
    <property type="evidence" value="ECO:0007669"/>
    <property type="project" value="UniProtKB-EC"/>
</dbReference>
<dbReference type="GO" id="GO:0017022">
    <property type="term" value="F:myosin binding"/>
    <property type="evidence" value="ECO:0000353"/>
    <property type="project" value="FlyBase"/>
</dbReference>
<dbReference type="GO" id="GO:0030165">
    <property type="term" value="F:PDZ domain binding"/>
    <property type="evidence" value="ECO:0000353"/>
    <property type="project" value="UniProtKB"/>
</dbReference>
<dbReference type="GO" id="GO:0106310">
    <property type="term" value="F:protein serine kinase activity"/>
    <property type="evidence" value="ECO:0007669"/>
    <property type="project" value="RHEA"/>
</dbReference>
<dbReference type="GO" id="GO:0004674">
    <property type="term" value="F:protein serine/threonine kinase activity"/>
    <property type="evidence" value="ECO:0000314"/>
    <property type="project" value="UniProtKB"/>
</dbReference>
<dbReference type="GO" id="GO:0008270">
    <property type="term" value="F:zinc ion binding"/>
    <property type="evidence" value="ECO:0007669"/>
    <property type="project" value="UniProtKB-KW"/>
</dbReference>
<dbReference type="GO" id="GO:0034332">
    <property type="term" value="P:adherens junction organization"/>
    <property type="evidence" value="ECO:0000315"/>
    <property type="project" value="UniProtKB"/>
</dbReference>
<dbReference type="GO" id="GO:0045176">
    <property type="term" value="P:apical protein localization"/>
    <property type="evidence" value="ECO:0000303"/>
    <property type="project" value="FlyBase"/>
</dbReference>
<dbReference type="GO" id="GO:0055059">
    <property type="term" value="P:asymmetric neuroblast division"/>
    <property type="evidence" value="ECO:0000316"/>
    <property type="project" value="FlyBase"/>
</dbReference>
<dbReference type="GO" id="GO:0045167">
    <property type="term" value="P:asymmetric protein localization involved in cell fate determination"/>
    <property type="evidence" value="ECO:0000353"/>
    <property type="project" value="FlyBase"/>
</dbReference>
<dbReference type="GO" id="GO:0060446">
    <property type="term" value="P:branching involved in open tracheal system development"/>
    <property type="evidence" value="ECO:0000315"/>
    <property type="project" value="FlyBase"/>
</dbReference>
<dbReference type="GO" id="GO:0007043">
    <property type="term" value="P:cell-cell junction assembly"/>
    <property type="evidence" value="ECO:0000303"/>
    <property type="project" value="FlyBase"/>
</dbReference>
<dbReference type="GO" id="GO:0046667">
    <property type="term" value="P:compound eye retinal cell programmed cell death"/>
    <property type="evidence" value="ECO:0000314"/>
    <property type="project" value="FlyBase"/>
</dbReference>
<dbReference type="GO" id="GO:0003382">
    <property type="term" value="P:epithelial cell morphogenesis"/>
    <property type="evidence" value="ECO:0000315"/>
    <property type="project" value="FlyBase"/>
</dbReference>
<dbReference type="GO" id="GO:0030010">
    <property type="term" value="P:establishment of cell polarity"/>
    <property type="evidence" value="ECO:0000318"/>
    <property type="project" value="GO_Central"/>
</dbReference>
<dbReference type="GO" id="GO:0045198">
    <property type="term" value="P:establishment of epithelial cell apical/basal polarity"/>
    <property type="evidence" value="ECO:0000316"/>
    <property type="project" value="FlyBase"/>
</dbReference>
<dbReference type="GO" id="GO:0090163">
    <property type="term" value="P:establishment of epithelial cell planar polarity"/>
    <property type="evidence" value="ECO:0000315"/>
    <property type="project" value="FlyBase"/>
</dbReference>
<dbReference type="GO" id="GO:0000132">
    <property type="term" value="P:establishment of mitotic spindle orientation"/>
    <property type="evidence" value="ECO:0000315"/>
    <property type="project" value="FlyBase"/>
</dbReference>
<dbReference type="GO" id="GO:0007163">
    <property type="term" value="P:establishment or maintenance of cell polarity"/>
    <property type="evidence" value="ECO:0000315"/>
    <property type="project" value="FlyBase"/>
</dbReference>
<dbReference type="GO" id="GO:0045197">
    <property type="term" value="P:establishment or maintenance of epithelial cell apical/basal polarity"/>
    <property type="evidence" value="ECO:0000315"/>
    <property type="project" value="FlyBase"/>
</dbReference>
<dbReference type="GO" id="GO:0045196">
    <property type="term" value="P:establishment or maintenance of neuroblast polarity"/>
    <property type="evidence" value="ECO:0000315"/>
    <property type="project" value="FlyBase"/>
</dbReference>
<dbReference type="GO" id="GO:0016332">
    <property type="term" value="P:establishment or maintenance of polarity of embryonic epithelium"/>
    <property type="evidence" value="ECO:0000315"/>
    <property type="project" value="FlyBase"/>
</dbReference>
<dbReference type="GO" id="GO:0016334">
    <property type="term" value="P:establishment or maintenance of polarity of follicular epithelium"/>
    <property type="evidence" value="ECO:0000315"/>
    <property type="project" value="FlyBase"/>
</dbReference>
<dbReference type="GO" id="GO:0051601">
    <property type="term" value="P:exocyst localization"/>
    <property type="evidence" value="ECO:0000315"/>
    <property type="project" value="FlyBase"/>
</dbReference>
<dbReference type="GO" id="GO:0007294">
    <property type="term" value="P:germarium-derived oocyte fate determination"/>
    <property type="evidence" value="ECO:0000315"/>
    <property type="project" value="FlyBase"/>
</dbReference>
<dbReference type="GO" id="GO:0035556">
    <property type="term" value="P:intracellular signal transduction"/>
    <property type="evidence" value="ECO:0000318"/>
    <property type="project" value="GO_Central"/>
</dbReference>
<dbReference type="GO" id="GO:0030011">
    <property type="term" value="P:maintenance of cell polarity"/>
    <property type="evidence" value="ECO:0000315"/>
    <property type="project" value="FlyBase"/>
</dbReference>
<dbReference type="GO" id="GO:0035011">
    <property type="term" value="P:melanotic encapsulation of foreign target"/>
    <property type="evidence" value="ECO:0000315"/>
    <property type="project" value="FlyBase"/>
</dbReference>
<dbReference type="GO" id="GO:0007613">
    <property type="term" value="P:memory"/>
    <property type="evidence" value="ECO:0000315"/>
    <property type="project" value="FlyBase"/>
</dbReference>
<dbReference type="GO" id="GO:0001738">
    <property type="term" value="P:morphogenesis of a polarized epithelium"/>
    <property type="evidence" value="ECO:0000304"/>
    <property type="project" value="FlyBase"/>
</dbReference>
<dbReference type="GO" id="GO:0035331">
    <property type="term" value="P:negative regulation of hippo signaling"/>
    <property type="evidence" value="ECO:0000315"/>
    <property type="project" value="FlyBase"/>
</dbReference>
<dbReference type="GO" id="GO:0140591">
    <property type="term" value="P:nuclear envelope budding"/>
    <property type="evidence" value="ECO:0000315"/>
    <property type="project" value="FlyBase"/>
</dbReference>
<dbReference type="GO" id="GO:0007314">
    <property type="term" value="P:oocyte anterior/posterior axis specification"/>
    <property type="evidence" value="ECO:0000316"/>
    <property type="project" value="FlyBase"/>
</dbReference>
<dbReference type="GO" id="GO:0051491">
    <property type="term" value="P:positive regulation of filopodium assembly"/>
    <property type="evidence" value="ECO:0000315"/>
    <property type="project" value="FlyBase"/>
</dbReference>
<dbReference type="GO" id="GO:0010592">
    <property type="term" value="P:positive regulation of lamellipodium assembly"/>
    <property type="evidence" value="ECO:0000315"/>
    <property type="project" value="FlyBase"/>
</dbReference>
<dbReference type="GO" id="GO:0002052">
    <property type="term" value="P:positive regulation of neuroblast proliferation"/>
    <property type="evidence" value="ECO:0000315"/>
    <property type="project" value="FlyBase"/>
</dbReference>
<dbReference type="GO" id="GO:0045880">
    <property type="term" value="P:positive regulation of smoothened signaling pathway"/>
    <property type="evidence" value="ECO:0000315"/>
    <property type="project" value="FlyBase"/>
</dbReference>
<dbReference type="GO" id="GO:0072659">
    <property type="term" value="P:protein localization to plasma membrane"/>
    <property type="evidence" value="ECO:0000315"/>
    <property type="project" value="FlyBase"/>
</dbReference>
<dbReference type="GO" id="GO:1904580">
    <property type="term" value="P:regulation of intracellular mRNA localization"/>
    <property type="evidence" value="ECO:0000315"/>
    <property type="project" value="FlyBase"/>
</dbReference>
<dbReference type="GO" id="GO:0030860">
    <property type="term" value="P:regulation of polarized epithelial cell differentiation"/>
    <property type="evidence" value="ECO:0000315"/>
    <property type="project" value="FlyBase"/>
</dbReference>
<dbReference type="GO" id="GO:0007423">
    <property type="term" value="P:sensory organ development"/>
    <property type="evidence" value="ECO:0000315"/>
    <property type="project" value="FlyBase"/>
</dbReference>
<dbReference type="GO" id="GO:0007283">
    <property type="term" value="P:spermatogenesis"/>
    <property type="evidence" value="ECO:0000315"/>
    <property type="project" value="FlyBase"/>
</dbReference>
<dbReference type="GO" id="GO:0007416">
    <property type="term" value="P:synapse assembly"/>
    <property type="evidence" value="ECO:0000315"/>
    <property type="project" value="FlyBase"/>
</dbReference>
<dbReference type="GO" id="GO:0007430">
    <property type="term" value="P:terminal branching, open tracheal system"/>
    <property type="evidence" value="ECO:0000315"/>
    <property type="project" value="FlyBase"/>
</dbReference>
<dbReference type="GO" id="GO:0045186">
    <property type="term" value="P:zonula adherens assembly"/>
    <property type="evidence" value="ECO:0000304"/>
    <property type="project" value="FlyBase"/>
</dbReference>
<dbReference type="CDD" id="cd20794">
    <property type="entry name" value="C1_aPKC"/>
    <property type="match status" value="1"/>
</dbReference>
<dbReference type="CDD" id="cd06404">
    <property type="entry name" value="PB1_aPKC"/>
    <property type="match status" value="1"/>
</dbReference>
<dbReference type="CDD" id="cd05588">
    <property type="entry name" value="STKc_aPKC"/>
    <property type="match status" value="1"/>
</dbReference>
<dbReference type="FunFam" id="1.10.510.10:FF:000048">
    <property type="entry name" value="Protein kinase C"/>
    <property type="match status" value="1"/>
</dbReference>
<dbReference type="FunFam" id="3.10.20.90:FF:000071">
    <property type="entry name" value="Protein kinase C"/>
    <property type="match status" value="1"/>
</dbReference>
<dbReference type="FunFam" id="3.30.200.20:FF:000070">
    <property type="entry name" value="Protein kinase C"/>
    <property type="match status" value="1"/>
</dbReference>
<dbReference type="FunFam" id="3.30.60.20:FF:000012">
    <property type="entry name" value="Protein kinase C"/>
    <property type="match status" value="1"/>
</dbReference>
<dbReference type="Gene3D" id="3.30.60.20">
    <property type="match status" value="1"/>
</dbReference>
<dbReference type="Gene3D" id="3.10.20.90">
    <property type="entry name" value="Phosphatidylinositol 3-kinase Catalytic Subunit, Chain A, domain 1"/>
    <property type="match status" value="1"/>
</dbReference>
<dbReference type="Gene3D" id="3.30.200.20">
    <property type="entry name" value="Phosphorylase Kinase, domain 1"/>
    <property type="match status" value="1"/>
</dbReference>
<dbReference type="Gene3D" id="1.10.510.10">
    <property type="entry name" value="Transferase(Phosphotransferase) domain 1"/>
    <property type="match status" value="1"/>
</dbReference>
<dbReference type="InterPro" id="IPR000961">
    <property type="entry name" value="AGC-kinase_C"/>
</dbReference>
<dbReference type="InterPro" id="IPR034659">
    <property type="entry name" value="Atypical_PKC"/>
</dbReference>
<dbReference type="InterPro" id="IPR046349">
    <property type="entry name" value="C1-like_sf"/>
</dbReference>
<dbReference type="InterPro" id="IPR020454">
    <property type="entry name" value="DAG/PE-bd"/>
</dbReference>
<dbReference type="InterPro" id="IPR011009">
    <property type="entry name" value="Kinase-like_dom_sf"/>
</dbReference>
<dbReference type="InterPro" id="IPR053793">
    <property type="entry name" value="PB1-like"/>
</dbReference>
<dbReference type="InterPro" id="IPR034877">
    <property type="entry name" value="PB1_aPKC"/>
</dbReference>
<dbReference type="InterPro" id="IPR000270">
    <property type="entry name" value="PB1_dom"/>
</dbReference>
<dbReference type="InterPro" id="IPR002219">
    <property type="entry name" value="PE/DAG-bd"/>
</dbReference>
<dbReference type="InterPro" id="IPR012233">
    <property type="entry name" value="PKC"/>
</dbReference>
<dbReference type="InterPro" id="IPR017892">
    <property type="entry name" value="Pkinase_C"/>
</dbReference>
<dbReference type="InterPro" id="IPR000719">
    <property type="entry name" value="Prot_kinase_dom"/>
</dbReference>
<dbReference type="InterPro" id="IPR017441">
    <property type="entry name" value="Protein_kinase_ATP_BS"/>
</dbReference>
<dbReference type="InterPro" id="IPR008271">
    <property type="entry name" value="Ser/Thr_kinase_AS"/>
</dbReference>
<dbReference type="PANTHER" id="PTHR24351">
    <property type="entry name" value="RIBOSOMAL PROTEIN S6 KINASE"/>
    <property type="match status" value="1"/>
</dbReference>
<dbReference type="Pfam" id="PF00130">
    <property type="entry name" value="C1_1"/>
    <property type="match status" value="1"/>
</dbReference>
<dbReference type="Pfam" id="PF00564">
    <property type="entry name" value="PB1"/>
    <property type="match status" value="1"/>
</dbReference>
<dbReference type="Pfam" id="PF00069">
    <property type="entry name" value="Pkinase"/>
    <property type="match status" value="1"/>
</dbReference>
<dbReference type="Pfam" id="PF00433">
    <property type="entry name" value="Pkinase_C"/>
    <property type="match status" value="1"/>
</dbReference>
<dbReference type="PIRSF" id="PIRSF000554">
    <property type="entry name" value="PKC_zeta"/>
    <property type="match status" value="1"/>
</dbReference>
<dbReference type="PRINTS" id="PR00008">
    <property type="entry name" value="DAGPEDOMAIN"/>
</dbReference>
<dbReference type="SMART" id="SM00109">
    <property type="entry name" value="C1"/>
    <property type="match status" value="1"/>
</dbReference>
<dbReference type="SMART" id="SM00666">
    <property type="entry name" value="PB1"/>
    <property type="match status" value="1"/>
</dbReference>
<dbReference type="SMART" id="SM00133">
    <property type="entry name" value="S_TK_X"/>
    <property type="match status" value="1"/>
</dbReference>
<dbReference type="SMART" id="SM00220">
    <property type="entry name" value="S_TKc"/>
    <property type="match status" value="1"/>
</dbReference>
<dbReference type="SUPFAM" id="SSF54277">
    <property type="entry name" value="CAD &amp; PB1 domains"/>
    <property type="match status" value="1"/>
</dbReference>
<dbReference type="SUPFAM" id="SSF57889">
    <property type="entry name" value="Cysteine-rich domain"/>
    <property type="match status" value="1"/>
</dbReference>
<dbReference type="SUPFAM" id="SSF56112">
    <property type="entry name" value="Protein kinase-like (PK-like)"/>
    <property type="match status" value="1"/>
</dbReference>
<dbReference type="PROSITE" id="PS51285">
    <property type="entry name" value="AGC_KINASE_CTER"/>
    <property type="match status" value="1"/>
</dbReference>
<dbReference type="PROSITE" id="PS51745">
    <property type="entry name" value="PB1"/>
    <property type="match status" value="1"/>
</dbReference>
<dbReference type="PROSITE" id="PS00107">
    <property type="entry name" value="PROTEIN_KINASE_ATP"/>
    <property type="match status" value="1"/>
</dbReference>
<dbReference type="PROSITE" id="PS50011">
    <property type="entry name" value="PROTEIN_KINASE_DOM"/>
    <property type="match status" value="1"/>
</dbReference>
<dbReference type="PROSITE" id="PS00108">
    <property type="entry name" value="PROTEIN_KINASE_ST"/>
    <property type="match status" value="1"/>
</dbReference>
<dbReference type="PROSITE" id="PS00479">
    <property type="entry name" value="ZF_DAG_PE_1"/>
    <property type="match status" value="1"/>
</dbReference>
<dbReference type="PROSITE" id="PS50081">
    <property type="entry name" value="ZF_DAG_PE_2"/>
    <property type="match status" value="1"/>
</dbReference>
<organism>
    <name type="scientific">Drosophila melanogaster</name>
    <name type="common">Fruit fly</name>
    <dbReference type="NCBI Taxonomy" id="7227"/>
    <lineage>
        <taxon>Eukaryota</taxon>
        <taxon>Metazoa</taxon>
        <taxon>Ecdysozoa</taxon>
        <taxon>Arthropoda</taxon>
        <taxon>Hexapoda</taxon>
        <taxon>Insecta</taxon>
        <taxon>Pterygota</taxon>
        <taxon>Neoptera</taxon>
        <taxon>Endopterygota</taxon>
        <taxon>Diptera</taxon>
        <taxon>Brachycera</taxon>
        <taxon>Muscomorpha</taxon>
        <taxon>Ephydroidea</taxon>
        <taxon>Drosophilidae</taxon>
        <taxon>Drosophila</taxon>
        <taxon>Sophophora</taxon>
    </lineage>
</organism>
<comment type="function">
    <text evidence="7 8 9 10 13 14 15 16 17 18 19 20 21 22 23">Serine/threonine protein kinase which is required for apico-basal cell polarity in the germ line as well as in epithelial and neural precursor cells, for epithelial planar cell polarity and for cell proliferation. During oocyte development, required for the posterior translocation of oocyte specification factors and for the posterior establishment of the microtubule organizing center within the presumptive oocyte. Phosphorylates l(2)gl which restricts l(2)gl activity to the oocyte posterior and regulates posterior enrichment of par-1, leading to establishment of correct oocyte polarity. Essential for apical localization of l(2)gl and par-6 in neuroblasts and for exclusion of mira from the apical cortex. Phosphorylates baz which is required for targeting of baz to the postsynaptic region where it is involved in actin organization, and for apical exclusion of baz which is necessary for establishment of the apical/lateral border in epithelial cells. Phosphorylates yrt which prevents its premature apical localization and is necessary for correct epithelial cell polarization. Required for the establishment of mitotic spindle orientation during symmetric division of epithelial cells and for apical exclusion of raps/Pins. Involved in symmetric adherens junction positioning during embryogenesis. Required for polarization of the spermatid cyst which is necessary for sperm differentiation. Required for stimulation of the Toll signaling pathway which activates Dif and dl and plays a role in innate immunity. Plays a role in memory enhancement.</text>
</comment>
<comment type="catalytic activity">
    <reaction evidence="25">
        <text>L-seryl-[protein] + ATP = O-phospho-L-seryl-[protein] + ADP + H(+)</text>
        <dbReference type="Rhea" id="RHEA:17989"/>
        <dbReference type="Rhea" id="RHEA-COMP:9863"/>
        <dbReference type="Rhea" id="RHEA-COMP:11604"/>
        <dbReference type="ChEBI" id="CHEBI:15378"/>
        <dbReference type="ChEBI" id="CHEBI:29999"/>
        <dbReference type="ChEBI" id="CHEBI:30616"/>
        <dbReference type="ChEBI" id="CHEBI:83421"/>
        <dbReference type="ChEBI" id="CHEBI:456216"/>
        <dbReference type="EC" id="2.7.11.13"/>
    </reaction>
</comment>
<comment type="catalytic activity">
    <reaction evidence="25">
        <text>L-threonyl-[protein] + ATP = O-phospho-L-threonyl-[protein] + ADP + H(+)</text>
        <dbReference type="Rhea" id="RHEA:46608"/>
        <dbReference type="Rhea" id="RHEA-COMP:11060"/>
        <dbReference type="Rhea" id="RHEA-COMP:11605"/>
        <dbReference type="ChEBI" id="CHEBI:15378"/>
        <dbReference type="ChEBI" id="CHEBI:30013"/>
        <dbReference type="ChEBI" id="CHEBI:30616"/>
        <dbReference type="ChEBI" id="CHEBI:61977"/>
        <dbReference type="ChEBI" id="CHEBI:456216"/>
        <dbReference type="EC" id="2.7.11.13"/>
    </reaction>
</comment>
<comment type="subunit">
    <text evidence="7 10 14 17 18 22">Interacts with baz; the interaction is required for apical localization of aPKC in neuroblasts and epithelial cells. Interacts with Dap160; the interaction promotes aPKC apical localization and kinase activity. Interacts with and phosphorylates l(2)gl and yrt. Interacts with crb and ref(2)P. Forms a complex with baz, fz and Patj.</text>
</comment>
<comment type="interaction">
    <interactant intactId="EBI-160861">
        <id>A1Z9X0</id>
    </interactant>
    <interactant intactId="EBI-867941">
        <id>O96782</id>
        <label>baz</label>
    </interactant>
    <organismsDiffer>false</organismsDiffer>
    <experiments>2</experiments>
</comment>
<comment type="interaction">
    <interactant intactId="EBI-160861">
        <id>A1Z9X0</id>
    </interactant>
    <interactant intactId="EBI-2295779">
        <id>Q9VX75</id>
        <label>baz</label>
    </interactant>
    <organismsDiffer>false</organismsDiffer>
    <experiments>3</experiments>
</comment>
<comment type="interaction">
    <interactant intactId="EBI-160861">
        <id>A1Z9X0</id>
    </interactant>
    <interactant intactId="EBI-672928">
        <id>P10040</id>
        <label>crb</label>
    </interactant>
    <organismsDiffer>false</organismsDiffer>
    <experiments>3</experiments>
</comment>
<comment type="interaction">
    <interactant intactId="EBI-160861">
        <id>A1Z9X0</id>
    </interactant>
    <interactant intactId="EBI-497569">
        <id>P08111</id>
        <label>l(2)gl</label>
    </interactant>
    <organismsDiffer>false</organismsDiffer>
    <experiments>2</experiments>
</comment>
<comment type="interaction">
    <interactant intactId="EBI-160861">
        <id>A1Z9X0</id>
    </interactant>
    <interactant intactId="EBI-186645">
        <id>O97111</id>
        <label>par-6</label>
    </interactant>
    <organismsDiffer>false</organismsDiffer>
    <experiments>7</experiments>
</comment>
<comment type="interaction">
    <interactant intactId="EBI-160861">
        <id>A1Z9X0</id>
    </interactant>
    <interactant intactId="EBI-442573">
        <id>Q9NB04</id>
        <label>Patj</label>
    </interactant>
    <organismsDiffer>false</organismsDiffer>
    <experiments>2</experiments>
</comment>
<comment type="subcellular location">
    <subcellularLocation>
        <location evidence="7 8 14 18 20 23">Cytoplasm</location>
        <location evidence="7 8 14 18 20 23">Cell cortex</location>
    </subcellularLocation>
    <subcellularLocation>
        <location evidence="7 8 14 18 20 23">Apicolateral cell membrane</location>
        <topology evidence="7 8 14 18 20 23">Peripheral membrane protein</topology>
    </subcellularLocation>
    <text evidence="7 8 14 18 20 23">Cytoplasmic at interphase but localizes to the apical cell cortex during mitosis.</text>
</comment>
<comment type="alternative products">
    <event type="alternative splicing"/>
    <isoform>
        <id>A1Z9X0-1</id>
        <name evidence="7">A</name>
        <name evidence="30">C</name>
        <sequence type="displayed"/>
    </isoform>
    <isoform>
        <id>A1Z9X0-2</id>
        <name evidence="12">B</name>
        <sequence type="described" ref="VSP_056765 VSP_056766 VSP_056768"/>
    </isoform>
    <isoform>
        <id>A1Z9X0-3</id>
        <name evidence="12">D</name>
        <sequence type="described" ref="VSP_056768"/>
    </isoform>
    <isoform>
        <id>A1Z9X0-4</id>
        <name evidence="12">E</name>
        <sequence type="described" ref="VSP_056765 VSP_056766"/>
    </isoform>
    <isoform>
        <id>A1Z9X0-5</id>
        <name evidence="12">F</name>
        <sequence type="described" ref="VSP_056764 VSP_056767"/>
    </isoform>
</comment>
<comment type="tissue specificity">
    <text evidence="7 23">Expressed in the testis. In spermatid cysts, localizes near the tips of spermatid flagellar axonemes (at protein level). Detectable in freshly laid eggs before onset of zygotic transcription so is deposited in the egg during oogenesis. At the cellular blastoderm stage, present in all cells except the pole cells. During gastrulation, strongly expressed in tissues undergoing morphogenetic movements such as invaginating mesoderm, proctodeum and cephalic furrow. Strongly expressed in neuroblasts.</text>
</comment>
<comment type="disruption phenotype">
    <text evidence="8 13 16 22">Zygotes survive to mid-larval stages where they exhibit defects in neuroblast and epithelial cell polarity. Mutant neuroblasts lack apical localization of l(2)gl and par-6, and fail to exclude mira from the apical cortex. Oocytes do not differentiate and display failure of BicD and ORB to translocate from the anterior to the posterior crescent, accumulation of Dhc64C in the two posterior-most presumptive pre-oocytes instead of in a single cell as normal, and defective posterior assembly of the microtubule organizing center. Adherens junctions form atypical planar-polarized puncta at gastrulation. Reduced yrt phosphorylation.</text>
</comment>
<comment type="similarity">
    <text evidence="1">Belongs to the protein kinase superfamily. AGC Ser/Thr protein kinase family. PKC subfamily.</text>
</comment>
<gene>
    <name evidence="26 30" type="primary">aPKC</name>
    <name type="ORF">CG30475</name>
</gene>
<feature type="chain" id="PRO_0000430488" description="Atypical protein kinase C">
    <location>
        <begin position="1"/>
        <end position="606"/>
    </location>
</feature>
<feature type="domain" description="PB1" evidence="5">
    <location>
        <begin position="30"/>
        <end position="113"/>
    </location>
</feature>
<feature type="domain" description="Protein kinase" evidence="2">
    <location>
        <begin position="264"/>
        <end position="532"/>
    </location>
</feature>
<feature type="domain" description="AGC-kinase C-terminal" evidence="4">
    <location>
        <begin position="533"/>
        <end position="604"/>
    </location>
</feature>
<feature type="zinc finger region" description="Phorbol-ester/DAG-type" evidence="3">
    <location>
        <begin position="145"/>
        <end position="195"/>
    </location>
</feature>
<feature type="active site" description="Proton acceptor" evidence="2 6">
    <location>
        <position position="388"/>
    </location>
</feature>
<feature type="binding site" evidence="2">
    <location>
        <begin position="270"/>
        <end position="278"/>
    </location>
    <ligand>
        <name>ATP</name>
        <dbReference type="ChEBI" id="CHEBI:30616"/>
    </ligand>
</feature>
<feature type="binding site" evidence="2">
    <location>
        <position position="293"/>
    </location>
    <ligand>
        <name>ATP</name>
        <dbReference type="ChEBI" id="CHEBI:30616"/>
    </ligand>
</feature>
<feature type="splice variant" id="VSP_056764" description="In isoform F." evidence="24">
    <location>
        <begin position="1"/>
        <end position="103"/>
    </location>
</feature>
<feature type="splice variant" id="VSP_056765" description="In isoform B and isoform E." evidence="24">
    <location>
        <begin position="1"/>
        <end position="82"/>
    </location>
</feature>
<feature type="splice variant" id="VSP_056766" description="In isoform B and isoform E." evidence="24">
    <original>CTISTKMELDEAIRLYEMNFDSQLVIHV</original>
    <variation>MIIWSGFCEAAQIYSTQTATFMSGGASL</variation>
    <location>
        <begin position="83"/>
        <end position="110"/>
    </location>
</feature>
<feature type="splice variant" id="VSP_056767" description="In isoform F." evidence="24">
    <original>SQLVIHV</original>
    <variation>MGKLACL</variation>
    <location>
        <begin position="104"/>
        <end position="110"/>
    </location>
</feature>
<feature type="splice variant" id="VSP_056768" description="In isoform B and isoform D." evidence="24">
    <original>LERKQVTPPFKPRLDSDRDLANFPPEFTGEAVQLTPDDD</original>
    <variation>IAQKEVQPPYIPNIDTGDPYVTSNFDVQFTQEPAVLTPDDP</variation>
    <location>
        <begin position="540"/>
        <end position="578"/>
    </location>
</feature>
<feature type="sequence conflict" description="In Ref. 1; AAG01528." evidence="25" ref="1">
    <original>S</original>
    <variation>T</variation>
    <location>
        <position position="16"/>
    </location>
</feature>
<feature type="sequence conflict" description="In Ref. 1; AAG01528." evidence="25" ref="1">
    <original>N</original>
    <variation>S</variation>
    <location>
        <position position="18"/>
    </location>
</feature>
<feature type="sequence conflict" description="In Ref. 5; AAM48431." evidence="25" ref="5">
    <original>N</original>
    <variation>K</variation>
    <location>
        <position position="101"/>
    </location>
</feature>
<evidence type="ECO:0000255" key="1"/>
<evidence type="ECO:0000255" key="2">
    <source>
        <dbReference type="PROSITE-ProRule" id="PRU00159"/>
    </source>
</evidence>
<evidence type="ECO:0000255" key="3">
    <source>
        <dbReference type="PROSITE-ProRule" id="PRU00226"/>
    </source>
</evidence>
<evidence type="ECO:0000255" key="4">
    <source>
        <dbReference type="PROSITE-ProRule" id="PRU00618"/>
    </source>
</evidence>
<evidence type="ECO:0000255" key="5">
    <source>
        <dbReference type="PROSITE-ProRule" id="PRU01081"/>
    </source>
</evidence>
<evidence type="ECO:0000255" key="6">
    <source>
        <dbReference type="PROSITE-ProRule" id="PRU10027"/>
    </source>
</evidence>
<evidence type="ECO:0000269" key="7">
    <source>
    </source>
</evidence>
<evidence type="ECO:0000269" key="8">
    <source>
    </source>
</evidence>
<evidence type="ECO:0000269" key="9">
    <source>
    </source>
</evidence>
<evidence type="ECO:0000269" key="10">
    <source>
    </source>
</evidence>
<evidence type="ECO:0000269" key="11">
    <source>
    </source>
</evidence>
<evidence type="ECO:0000269" key="12">
    <source>
    </source>
</evidence>
<evidence type="ECO:0000269" key="13">
    <source>
    </source>
</evidence>
<evidence type="ECO:0000269" key="14">
    <source>
    </source>
</evidence>
<evidence type="ECO:0000269" key="15">
    <source>
    </source>
</evidence>
<evidence type="ECO:0000269" key="16">
    <source>
    </source>
</evidence>
<evidence type="ECO:0000269" key="17">
    <source>
    </source>
</evidence>
<evidence type="ECO:0000269" key="18">
    <source>
    </source>
</evidence>
<evidence type="ECO:0000269" key="19">
    <source>
    </source>
</evidence>
<evidence type="ECO:0000269" key="20">
    <source>
    </source>
</evidence>
<evidence type="ECO:0000269" key="21">
    <source>
    </source>
</evidence>
<evidence type="ECO:0000269" key="22">
    <source>
    </source>
</evidence>
<evidence type="ECO:0000269" key="23">
    <source>
    </source>
</evidence>
<evidence type="ECO:0000303" key="24">
    <source>
    </source>
</evidence>
<evidence type="ECO:0000305" key="25"/>
<evidence type="ECO:0000312" key="26">
    <source>
        <dbReference type="EMBL" id="AAF58177.2"/>
    </source>
</evidence>
<evidence type="ECO:0000312" key="27">
    <source>
        <dbReference type="EMBL" id="AAG01528.1"/>
    </source>
</evidence>
<evidence type="ECO:0000312" key="28">
    <source>
        <dbReference type="EMBL" id="AAM48431.1"/>
    </source>
</evidence>
<evidence type="ECO:0000312" key="29">
    <source>
        <dbReference type="EMBL" id="ACL68694.1"/>
    </source>
</evidence>
<evidence type="ECO:0000312" key="30">
    <source>
        <dbReference type="FlyBase" id="FBgn0261854"/>
    </source>
</evidence>
<sequence length="606" mass="69556">MQKMPSQILNDGSSVSLNSASMNMANTPNSITVKTAYNGQIIITTINKNISYEELCYEIRNICRFPLDQPFTIKWVDEENDPCTISTKMELDEAIRLYEMNFDSQLVIHVFPNVPQAPGLSCDGEDRSIYRRGARRWRKLYRVNGHIFQAKRFNRRAFCAYCQDRIWGLGRQGFKCIQCKLLVHKKCHKLVQKHCTDQPEPLVKERAEESSDPIPVPLPPLPYEAMSGGAEACETHDHAHIVAPPPPEDPLEPGTQRQYSLNDFELIRVIGRGSYAKVLMVELRRTRRIYAMKVIKKALVTDDEDIDWVQTEKHVFETASNHPFLVGLHSCFQTPSRLFFVIEFVRGGDLMYHMQRQRRLPEEHARFYAAEISLALNFLHEKGIIYRDLKLDNVLLDHEGHIKLTDYGMCKEGIRPGDTTSTFCGTPNYIAPEILRGEDYGFSVDWWALGVLLYEMLAGRSPFDLAGASENPDQNTEDYLFQVILEKTIRIPRSLSVRAASVLKGFLNKNPADRLGCHRESAFMDIVSHPFFKNMDWELLERKQVTPPFKPRLDSDRDLANFPPEFTGEAVQLTPDDDHVIDNIDQSEFEGFEYVNPLLMSLEDCV</sequence>
<protein>
    <recommendedName>
        <fullName evidence="26">Atypical protein kinase C</fullName>
        <ecNumber>2.7.11.13</ecNumber>
    </recommendedName>
</protein>
<proteinExistence type="evidence at protein level"/>
<keyword id="KW-0025">Alternative splicing</keyword>
<keyword id="KW-0067">ATP-binding</keyword>
<keyword id="KW-1003">Cell membrane</keyword>
<keyword id="KW-0963">Cytoplasm</keyword>
<keyword id="KW-0418">Kinase</keyword>
<keyword id="KW-0472">Membrane</keyword>
<keyword id="KW-0479">Metal-binding</keyword>
<keyword id="KW-0547">Nucleotide-binding</keyword>
<keyword id="KW-0597">Phosphoprotein</keyword>
<keyword id="KW-1185">Reference proteome</keyword>
<keyword id="KW-0723">Serine/threonine-protein kinase</keyword>
<keyword id="KW-0808">Transferase</keyword>
<keyword id="KW-0862">Zinc</keyword>
<keyword id="KW-0863">Zinc-finger</keyword>
<accession>A1Z9X0</accession>
<accession>Q0E971</accession>
<accession>Q0E972</accession>
<accession>Q0E973</accession>
<accession>Q0E974</accession>
<accession>Q8MT38</accession>
<accession>Q9GSZ3</accession>
<name>APKC_DROME</name>
<reference evidence="25 27" key="1">
    <citation type="journal article" date="2000" name="J. Cell Biol.">
        <title>Drosophila atypical protein kinase C associates with Bazooka and controls polarity of epithelia and neuroblasts.</title>
        <authorList>
            <person name="Wodarz A."/>
            <person name="Ramrath A."/>
            <person name="Grimm A."/>
            <person name="Knust E."/>
        </authorList>
    </citation>
    <scope>NUCLEOTIDE SEQUENCE [MRNA] (ISOFORM A)</scope>
    <scope>FUNCTION</scope>
    <scope>INTERACTION WITH BAZ</scope>
    <scope>SUBCELLULAR LOCATION</scope>
    <scope>TISSUE SPECIFICITY</scope>
</reference>
<reference key="2">
    <citation type="journal article" date="2004" name="J. Cell Biol.">
        <authorList>
            <person name="Wodarz A."/>
            <person name="Ramrath A."/>
            <person name="Grimm A."/>
            <person name="Knust E."/>
        </authorList>
    </citation>
    <scope>ERRATUM OF PUBMED:10995441</scope>
</reference>
<reference evidence="26" key="3">
    <citation type="journal article" date="2000" name="Science">
        <title>The genome sequence of Drosophila melanogaster.</title>
        <authorList>
            <person name="Adams M.D."/>
            <person name="Celniker S.E."/>
            <person name="Holt R.A."/>
            <person name="Evans C.A."/>
            <person name="Gocayne J.D."/>
            <person name="Amanatides P.G."/>
            <person name="Scherer S.E."/>
            <person name="Li P.W."/>
            <person name="Hoskins R.A."/>
            <person name="Galle R.F."/>
            <person name="George R.A."/>
            <person name="Lewis S.E."/>
            <person name="Richards S."/>
            <person name="Ashburner M."/>
            <person name="Henderson S.N."/>
            <person name="Sutton G.G."/>
            <person name="Wortman J.R."/>
            <person name="Yandell M.D."/>
            <person name="Zhang Q."/>
            <person name="Chen L.X."/>
            <person name="Brandon R.C."/>
            <person name="Rogers Y.-H.C."/>
            <person name="Blazej R.G."/>
            <person name="Champe M."/>
            <person name="Pfeiffer B.D."/>
            <person name="Wan K.H."/>
            <person name="Doyle C."/>
            <person name="Baxter E.G."/>
            <person name="Helt G."/>
            <person name="Nelson C.R."/>
            <person name="Miklos G.L.G."/>
            <person name="Abril J.F."/>
            <person name="Agbayani A."/>
            <person name="An H.-J."/>
            <person name="Andrews-Pfannkoch C."/>
            <person name="Baldwin D."/>
            <person name="Ballew R.M."/>
            <person name="Basu A."/>
            <person name="Baxendale J."/>
            <person name="Bayraktaroglu L."/>
            <person name="Beasley E.M."/>
            <person name="Beeson K.Y."/>
            <person name="Benos P.V."/>
            <person name="Berman B.P."/>
            <person name="Bhandari D."/>
            <person name="Bolshakov S."/>
            <person name="Borkova D."/>
            <person name="Botchan M.R."/>
            <person name="Bouck J."/>
            <person name="Brokstein P."/>
            <person name="Brottier P."/>
            <person name="Burtis K.C."/>
            <person name="Busam D.A."/>
            <person name="Butler H."/>
            <person name="Cadieu E."/>
            <person name="Center A."/>
            <person name="Chandra I."/>
            <person name="Cherry J.M."/>
            <person name="Cawley S."/>
            <person name="Dahlke C."/>
            <person name="Davenport L.B."/>
            <person name="Davies P."/>
            <person name="de Pablos B."/>
            <person name="Delcher A."/>
            <person name="Deng Z."/>
            <person name="Mays A.D."/>
            <person name="Dew I."/>
            <person name="Dietz S.M."/>
            <person name="Dodson K."/>
            <person name="Doup L.E."/>
            <person name="Downes M."/>
            <person name="Dugan-Rocha S."/>
            <person name="Dunkov B.C."/>
            <person name="Dunn P."/>
            <person name="Durbin K.J."/>
            <person name="Evangelista C.C."/>
            <person name="Ferraz C."/>
            <person name="Ferriera S."/>
            <person name="Fleischmann W."/>
            <person name="Fosler C."/>
            <person name="Gabrielian A.E."/>
            <person name="Garg N.S."/>
            <person name="Gelbart W.M."/>
            <person name="Glasser K."/>
            <person name="Glodek A."/>
            <person name="Gong F."/>
            <person name="Gorrell J.H."/>
            <person name="Gu Z."/>
            <person name="Guan P."/>
            <person name="Harris M."/>
            <person name="Harris N.L."/>
            <person name="Harvey D.A."/>
            <person name="Heiman T.J."/>
            <person name="Hernandez J.R."/>
            <person name="Houck J."/>
            <person name="Hostin D."/>
            <person name="Houston K.A."/>
            <person name="Howland T.J."/>
            <person name="Wei M.-H."/>
            <person name="Ibegwam C."/>
            <person name="Jalali M."/>
            <person name="Kalush F."/>
            <person name="Karpen G.H."/>
            <person name="Ke Z."/>
            <person name="Kennison J.A."/>
            <person name="Ketchum K.A."/>
            <person name="Kimmel B.E."/>
            <person name="Kodira C.D."/>
            <person name="Kraft C.L."/>
            <person name="Kravitz S."/>
            <person name="Kulp D."/>
            <person name="Lai Z."/>
            <person name="Lasko P."/>
            <person name="Lei Y."/>
            <person name="Levitsky A.A."/>
            <person name="Li J.H."/>
            <person name="Li Z."/>
            <person name="Liang Y."/>
            <person name="Lin X."/>
            <person name="Liu X."/>
            <person name="Mattei B."/>
            <person name="McIntosh T.C."/>
            <person name="McLeod M.P."/>
            <person name="McPherson D."/>
            <person name="Merkulov G."/>
            <person name="Milshina N.V."/>
            <person name="Mobarry C."/>
            <person name="Morris J."/>
            <person name="Moshrefi A."/>
            <person name="Mount S.M."/>
            <person name="Moy M."/>
            <person name="Murphy B."/>
            <person name="Murphy L."/>
            <person name="Muzny D.M."/>
            <person name="Nelson D.L."/>
            <person name="Nelson D.R."/>
            <person name="Nelson K.A."/>
            <person name="Nixon K."/>
            <person name="Nusskern D.R."/>
            <person name="Pacleb J.M."/>
            <person name="Palazzolo M."/>
            <person name="Pittman G.S."/>
            <person name="Pan S."/>
            <person name="Pollard J."/>
            <person name="Puri V."/>
            <person name="Reese M.G."/>
            <person name="Reinert K."/>
            <person name="Remington K."/>
            <person name="Saunders R.D.C."/>
            <person name="Scheeler F."/>
            <person name="Shen H."/>
            <person name="Shue B.C."/>
            <person name="Siden-Kiamos I."/>
            <person name="Simpson M."/>
            <person name="Skupski M.P."/>
            <person name="Smith T.J."/>
            <person name="Spier E."/>
            <person name="Spradling A.C."/>
            <person name="Stapleton M."/>
            <person name="Strong R."/>
            <person name="Sun E."/>
            <person name="Svirskas R."/>
            <person name="Tector C."/>
            <person name="Turner R."/>
            <person name="Venter E."/>
            <person name="Wang A.H."/>
            <person name="Wang X."/>
            <person name="Wang Z.-Y."/>
            <person name="Wassarman D.A."/>
            <person name="Weinstock G.M."/>
            <person name="Weissenbach J."/>
            <person name="Williams S.M."/>
            <person name="Woodage T."/>
            <person name="Worley K.C."/>
            <person name="Wu D."/>
            <person name="Yang S."/>
            <person name="Yao Q.A."/>
            <person name="Ye J."/>
            <person name="Yeh R.-F."/>
            <person name="Zaveri J.S."/>
            <person name="Zhan M."/>
            <person name="Zhang G."/>
            <person name="Zhao Q."/>
            <person name="Zheng L."/>
            <person name="Zheng X.H."/>
            <person name="Zhong F.N."/>
            <person name="Zhong W."/>
            <person name="Zhou X."/>
            <person name="Zhu S.C."/>
            <person name="Zhu X."/>
            <person name="Smith H.O."/>
            <person name="Gibbs R.A."/>
            <person name="Myers E.W."/>
            <person name="Rubin G.M."/>
            <person name="Venter J.C."/>
        </authorList>
    </citation>
    <scope>NUCLEOTIDE SEQUENCE [LARGE SCALE GENOMIC DNA]</scope>
    <source>
        <strain>Berkeley</strain>
    </source>
</reference>
<reference evidence="26" key="4">
    <citation type="journal article" date="2002" name="Genome Biol.">
        <title>Annotation of the Drosophila melanogaster euchromatic genome: a systematic review.</title>
        <authorList>
            <person name="Misra S."/>
            <person name="Crosby M.A."/>
            <person name="Mungall C.J."/>
            <person name="Matthews B.B."/>
            <person name="Campbell K.S."/>
            <person name="Hradecky P."/>
            <person name="Huang Y."/>
            <person name="Kaminker J.S."/>
            <person name="Millburn G.H."/>
            <person name="Prochnik S.E."/>
            <person name="Smith C.D."/>
            <person name="Tupy J.L."/>
            <person name="Whitfield E.J."/>
            <person name="Bayraktaroglu L."/>
            <person name="Berman B.P."/>
            <person name="Bettencourt B.R."/>
            <person name="Celniker S.E."/>
            <person name="de Grey A.D.N.J."/>
            <person name="Drysdale R.A."/>
            <person name="Harris N.L."/>
            <person name="Richter J."/>
            <person name="Russo S."/>
            <person name="Schroeder A.J."/>
            <person name="Shu S.Q."/>
            <person name="Stapleton M."/>
            <person name="Yamada C."/>
            <person name="Ashburner M."/>
            <person name="Gelbart W.M."/>
            <person name="Rubin G.M."/>
            <person name="Lewis S.E."/>
        </authorList>
    </citation>
    <scope>GENOME REANNOTATION</scope>
    <source>
        <strain>Berkeley</strain>
    </source>
</reference>
<reference evidence="25 28" key="5">
    <citation type="journal article" date="2002" name="Genome Biol.">
        <title>A Drosophila full-length cDNA resource.</title>
        <authorList>
            <person name="Stapleton M."/>
            <person name="Carlson J.W."/>
            <person name="Brokstein P."/>
            <person name="Yu C."/>
            <person name="Champe M."/>
            <person name="George R.A."/>
            <person name="Guarin H."/>
            <person name="Kronmiller B."/>
            <person name="Pacleb J.M."/>
            <person name="Park S."/>
            <person name="Wan K.H."/>
            <person name="Rubin G.M."/>
            <person name="Celniker S.E."/>
        </authorList>
    </citation>
    <scope>NUCLEOTIDE SEQUENCE [LARGE SCALE MRNA] (ISOFORM A)</scope>
    <source>
        <strain evidence="11">Berkeley</strain>
        <tissue evidence="11">Embryo</tissue>
    </source>
</reference>
<reference evidence="25 29" key="6">
    <citation type="submission" date="2009-01" db="EMBL/GenBank/DDBJ databases">
        <authorList>
            <person name="Carlson J."/>
            <person name="Booth B."/>
            <person name="Frise E."/>
            <person name="Park S."/>
            <person name="Wan K."/>
            <person name="Yu C."/>
            <person name="Celniker S."/>
        </authorList>
    </citation>
    <scope>NUCLEOTIDE SEQUENCE [LARGE SCALE MRNA] (ISOFORM A)</scope>
    <source>
        <strain>Berkeley</strain>
    </source>
</reference>
<reference evidence="25" key="7">
    <citation type="journal article" date="2001" name="Proc. Natl. Acad. Sci. U.S.A.">
        <title>Bazooka and atypical protein kinase C are required to regulate oocyte differentiation in the Drosophila ovary.</title>
        <authorList>
            <person name="Cox D.N."/>
            <person name="Seyfried S.A."/>
            <person name="Jan L.Y."/>
            <person name="Jan Y.N."/>
        </authorList>
    </citation>
    <scope>FUNCTION</scope>
    <scope>SUBCELLULAR LOCATION</scope>
    <scope>DISRUPTION PHENOTYPE</scope>
</reference>
<reference evidence="25" key="8">
    <citation type="journal article" date="2002" name="Mol. Cell. Biol.">
        <title>The Drosophila atypical protein kinase C-ref(2)p complex constitutes a conserved module for signaling in the toll pathway.</title>
        <authorList>
            <person name="Avila A."/>
            <person name="Silverman N."/>
            <person name="Diaz-Meco M.T."/>
            <person name="Moscat J."/>
        </authorList>
    </citation>
    <scope>FUNCTION</scope>
    <scope>INTERACTION WITH REF(2)P</scope>
</reference>
<reference evidence="25" key="9">
    <citation type="journal article" date="2002" name="Nat. Neurosci.">
        <title>Memory enhancement and formation by atypical PKM activity in Drosophila melanogaster.</title>
        <authorList>
            <person name="Drier E.A."/>
            <person name="Tello M.K."/>
            <person name="Cowan M."/>
            <person name="Wu P."/>
            <person name="Blace N."/>
            <person name="Sacktor T.C."/>
            <person name="Yin J.C."/>
        </authorList>
    </citation>
    <scope>FUNCTION</scope>
</reference>
<reference evidence="25" key="10">
    <citation type="journal article" date="2003" name="J. Cell Biol.">
        <title>Drosophila aPKC regulates cell polarity and cell proliferation in neuroblasts and epithelia.</title>
        <authorList>
            <person name="Rolls M.M."/>
            <person name="Albertson R."/>
            <person name="Shih H.P."/>
            <person name="Lee C.Y."/>
            <person name="Doe C.Q."/>
        </authorList>
    </citation>
    <scope>FUNCTION</scope>
    <scope>DISRUPTION PHENOTYPE</scope>
</reference>
<reference evidence="25" key="11">
    <citation type="journal article" date="2004" name="J. Cell Biol.">
        <title>DaPKC-dependent phosphorylation of Crumbs is required for epithelial cell polarity in Drosophila.</title>
        <authorList>
            <person name="Sotillos S."/>
            <person name="Diaz-Meco M.T."/>
            <person name="Caminero E."/>
            <person name="Moscat J."/>
            <person name="Campuzano S."/>
        </authorList>
    </citation>
    <scope>FUNCTION</scope>
    <scope>INTERACTION WITH CRB AND PATJ</scope>
    <scope>SUBCELLULAR LOCATION</scope>
</reference>
<reference evidence="25" key="12">
    <citation type="journal article" date="2005" name="Cell">
        <title>The apical determinants aPKC and dPatj regulate Frizzled-dependent planar cell polarity in the Drosophila eye.</title>
        <authorList>
            <person name="Djiane A."/>
            <person name="Yogev S."/>
            <person name="Mlodzik M."/>
        </authorList>
    </citation>
    <scope>FUNCTION</scope>
</reference>
<reference evidence="25" key="13">
    <citation type="journal article" date="2007" name="Dev. Cell">
        <title>aPKC controls microtubule organization to balance adherens junction symmetry and planar polarity during development.</title>
        <authorList>
            <person name="Harris T.J."/>
            <person name="Peifer M."/>
        </authorList>
    </citation>
    <scope>FUNCTION</scope>
    <scope>DISRUPTION PHENOTYPE</scope>
</reference>
<reference evidence="25" key="14">
    <citation type="journal article" date="2008" name="Development">
        <title>Lgl and its phosphorylation by aPKC regulate oocyte polarity formation in Drosophila.</title>
        <authorList>
            <person name="Tian A.G."/>
            <person name="Deng W.M."/>
        </authorList>
    </citation>
    <scope>FUNCTION</scope>
    <scope>INTERACTION WITH L(2)GL</scope>
</reference>
<reference evidence="25" key="15">
    <citation type="journal article" date="2008" name="Development">
        <title>Dap160/intersectin binds and activates aPKC to regulate cell polarity and cell cycle progression.</title>
        <authorList>
            <person name="Chabu C."/>
            <person name="Doe C.Q."/>
        </authorList>
    </citation>
    <scope>FUNCTION</scope>
    <scope>INTERACTION WITH DAP160</scope>
    <scope>SUBCELLULAR LOCATION</scope>
</reference>
<reference evidence="25" key="16">
    <citation type="journal article" date="2009" name="Dev. Neurobiol.">
        <title>A critical step for postsynaptic F-actin organization: regulation of Baz/Par-3 localization by aPKC and PTEN.</title>
        <authorList>
            <person name="Ramachandran P."/>
            <person name="Barria R."/>
            <person name="Ashley J."/>
            <person name="Budnik V."/>
        </authorList>
    </citation>
    <scope>FUNCTION</scope>
</reference>
<reference evidence="25" key="17">
    <citation type="journal article" date="2010" name="Cell">
        <title>aPKC phosphorylation of Bazooka defines the apical/lateral border in Drosophila epithelial cells.</title>
        <authorList>
            <person name="Morais-de-Sa E."/>
            <person name="Mirouse V."/>
            <person name="St Johnston D."/>
        </authorList>
    </citation>
    <scope>FUNCTION</scope>
    <scope>SUBCELLULAR LOCATION</scope>
</reference>
<reference evidence="25" key="18">
    <citation type="journal article" date="2012" name="Development">
        <title>Drosophila aPKC is required for mitotic spindle orientation during symmetric division of epithelial cells.</title>
        <authorList>
            <person name="Guilgur L.G."/>
            <person name="Prudencio P."/>
            <person name="Ferreira T."/>
            <person name="Pimenta-Marques A.R."/>
            <person name="Martinho R.G."/>
        </authorList>
    </citation>
    <scope>FUNCTION</scope>
</reference>
<reference evidence="25" key="19">
    <citation type="journal article" date="2014" name="J. Cell Biol.">
        <title>A bidirectional antagonism between aPKC and Yurt regulates epithelial cell polarity.</title>
        <authorList>
            <person name="Gamblin C.L."/>
            <person name="Hardy E.J."/>
            <person name="Chartier F.J."/>
            <person name="Bisson N."/>
            <person name="Laprise P."/>
        </authorList>
    </citation>
    <scope>FUNCTION</scope>
    <scope>INTERACTION WITH YRT</scope>
    <scope>DISRUPTION PHENOTYPE</scope>
</reference>
<reference evidence="25" key="20">
    <citation type="journal article" date="2014" name="PLoS Genet.">
        <title>Spermatid cyst polarization in Drosophila depends upon apkc and the CPEB family translational regulator orb2.</title>
        <authorList>
            <person name="Xu S."/>
            <person name="Tyagi S."/>
            <person name="Schedl P."/>
        </authorList>
    </citation>
    <scope>FUNCTION</scope>
    <scope>SUBCELLULAR LOCATION</scope>
    <scope>TISSUE SPECIFICITY</scope>
</reference>